<dbReference type="EC" id="6.3.4.3" evidence="1"/>
<dbReference type="EMBL" id="AE004092">
    <property type="protein sequence ID" value="AAK34738.1"/>
    <property type="molecule type" value="Genomic_DNA"/>
</dbReference>
<dbReference type="EMBL" id="CP000017">
    <property type="protein sequence ID" value="AAZ52392.1"/>
    <property type="molecule type" value="Genomic_DNA"/>
</dbReference>
<dbReference type="RefSeq" id="NP_270017.1">
    <property type="nucleotide sequence ID" value="NC_002737.2"/>
</dbReference>
<dbReference type="SMR" id="Q99XR2"/>
<dbReference type="PaxDb" id="1314-HKU360_01887"/>
<dbReference type="KEGG" id="spy:SPy_2085"/>
<dbReference type="KEGG" id="spz:M5005_Spy1774"/>
<dbReference type="PATRIC" id="fig|160490.10.peg.1807"/>
<dbReference type="HOGENOM" id="CLU_003601_3_3_9"/>
<dbReference type="OMA" id="REDHFVI"/>
<dbReference type="UniPathway" id="UPA00193"/>
<dbReference type="Proteomes" id="UP000000750">
    <property type="component" value="Chromosome"/>
</dbReference>
<dbReference type="GO" id="GO:0005524">
    <property type="term" value="F:ATP binding"/>
    <property type="evidence" value="ECO:0007669"/>
    <property type="project" value="UniProtKB-UniRule"/>
</dbReference>
<dbReference type="GO" id="GO:0004329">
    <property type="term" value="F:formate-tetrahydrofolate ligase activity"/>
    <property type="evidence" value="ECO:0007669"/>
    <property type="project" value="UniProtKB-UniRule"/>
</dbReference>
<dbReference type="GO" id="GO:0035999">
    <property type="term" value="P:tetrahydrofolate interconversion"/>
    <property type="evidence" value="ECO:0007669"/>
    <property type="project" value="UniProtKB-UniRule"/>
</dbReference>
<dbReference type="CDD" id="cd00477">
    <property type="entry name" value="FTHFS"/>
    <property type="match status" value="1"/>
</dbReference>
<dbReference type="FunFam" id="3.30.1510.10:FF:000001">
    <property type="entry name" value="Formate--tetrahydrofolate ligase"/>
    <property type="match status" value="1"/>
</dbReference>
<dbReference type="FunFam" id="3.10.410.10:FF:000001">
    <property type="entry name" value="Putative formate--tetrahydrofolate ligase"/>
    <property type="match status" value="1"/>
</dbReference>
<dbReference type="Gene3D" id="3.30.1510.10">
    <property type="entry name" value="Domain 2, N(10)-formyltetrahydrofolate synthetase"/>
    <property type="match status" value="1"/>
</dbReference>
<dbReference type="Gene3D" id="3.10.410.10">
    <property type="entry name" value="Formyltetrahydrofolate synthetase, domain 3"/>
    <property type="match status" value="1"/>
</dbReference>
<dbReference type="Gene3D" id="3.40.50.300">
    <property type="entry name" value="P-loop containing nucleotide triphosphate hydrolases"/>
    <property type="match status" value="1"/>
</dbReference>
<dbReference type="HAMAP" id="MF_01543">
    <property type="entry name" value="FTHFS"/>
    <property type="match status" value="1"/>
</dbReference>
<dbReference type="InterPro" id="IPR000559">
    <property type="entry name" value="Formate_THF_ligase"/>
</dbReference>
<dbReference type="InterPro" id="IPR020628">
    <property type="entry name" value="Formate_THF_ligase_CS"/>
</dbReference>
<dbReference type="InterPro" id="IPR027417">
    <property type="entry name" value="P-loop_NTPase"/>
</dbReference>
<dbReference type="NCBIfam" id="NF010030">
    <property type="entry name" value="PRK13505.1"/>
    <property type="match status" value="1"/>
</dbReference>
<dbReference type="Pfam" id="PF01268">
    <property type="entry name" value="FTHFS"/>
    <property type="match status" value="1"/>
</dbReference>
<dbReference type="SUPFAM" id="SSF52540">
    <property type="entry name" value="P-loop containing nucleoside triphosphate hydrolases"/>
    <property type="match status" value="1"/>
</dbReference>
<dbReference type="PROSITE" id="PS00721">
    <property type="entry name" value="FTHFS_1"/>
    <property type="match status" value="1"/>
</dbReference>
<dbReference type="PROSITE" id="PS00722">
    <property type="entry name" value="FTHFS_2"/>
    <property type="match status" value="1"/>
</dbReference>
<sequence length="557" mass="59054">MVLSDIEIANSVTMEPISKVADQLGIDKEALCLYGKYKAKIDARQLVALKNKPDGKLILVTAISPTPAGEGKTTTSVGLVDALSAIGKKAVIALREPSLGPVFGVKGGAAGGGHAQVVPMEDINLHFTGDFHAIGVANNLLAALIDNHIHHGNSLGIDSRRITWKRVVDMNDRQLRHIVDGLQGKVNGIPREDGYDITVASEIMAILCLSENISDLKARLEKIIIGYNYQGEPVTAKDLKAGGALAALLKDAIHPNLVQTLEHTPALIHGGPFANIAHGCNSVLATKLALKYGDYAVTEAGFGADLGAEKFIDIKCRMSGLRPAAVVLVATIRALKMHGGVPKADLATENVQAVVDGLPNLDKHLANIQDVYGLPVVVAINKFPLDTDAELQAVYDACDKRGVDVVISDVWANGGAGGRELAEKVVTLAEQDNQFRFVYEEDDSIETKLTKIVTKVYGGKGINLSSAAKRELADLERLGFGNYPICMAKTQYSFSDDAKKLGAPTDFTVTISNLKVSAGAGFIVALTGAIMTMPGLPKVPASETIDIDEEGNITGLF</sequence>
<keyword id="KW-0067">ATP-binding</keyword>
<keyword id="KW-0436">Ligase</keyword>
<keyword id="KW-0547">Nucleotide-binding</keyword>
<keyword id="KW-0554">One-carbon metabolism</keyword>
<keyword id="KW-1185">Reference proteome</keyword>
<comment type="catalytic activity">
    <reaction evidence="1">
        <text>(6S)-5,6,7,8-tetrahydrofolate + formate + ATP = (6R)-10-formyltetrahydrofolate + ADP + phosphate</text>
        <dbReference type="Rhea" id="RHEA:20221"/>
        <dbReference type="ChEBI" id="CHEBI:15740"/>
        <dbReference type="ChEBI" id="CHEBI:30616"/>
        <dbReference type="ChEBI" id="CHEBI:43474"/>
        <dbReference type="ChEBI" id="CHEBI:57453"/>
        <dbReference type="ChEBI" id="CHEBI:195366"/>
        <dbReference type="ChEBI" id="CHEBI:456216"/>
        <dbReference type="EC" id="6.3.4.3"/>
    </reaction>
</comment>
<comment type="pathway">
    <text evidence="1">One-carbon metabolism; tetrahydrofolate interconversion.</text>
</comment>
<comment type="similarity">
    <text evidence="1">Belongs to the formate--tetrahydrofolate ligase family.</text>
</comment>
<feature type="chain" id="PRO_0000199390" description="Formate--tetrahydrofolate ligase 2">
    <location>
        <begin position="1"/>
        <end position="557"/>
    </location>
</feature>
<feature type="binding site" evidence="1">
    <location>
        <begin position="66"/>
        <end position="73"/>
    </location>
    <ligand>
        <name>ATP</name>
        <dbReference type="ChEBI" id="CHEBI:30616"/>
    </ligand>
</feature>
<reference key="1">
    <citation type="journal article" date="2001" name="Proc. Natl. Acad. Sci. U.S.A.">
        <title>Complete genome sequence of an M1 strain of Streptococcus pyogenes.</title>
        <authorList>
            <person name="Ferretti J.J."/>
            <person name="McShan W.M."/>
            <person name="Ajdic D.J."/>
            <person name="Savic D.J."/>
            <person name="Savic G."/>
            <person name="Lyon K."/>
            <person name="Primeaux C."/>
            <person name="Sezate S."/>
            <person name="Suvorov A.N."/>
            <person name="Kenton S."/>
            <person name="Lai H.S."/>
            <person name="Lin S.P."/>
            <person name="Qian Y."/>
            <person name="Jia H.G."/>
            <person name="Najar F.Z."/>
            <person name="Ren Q."/>
            <person name="Zhu H."/>
            <person name="Song L."/>
            <person name="White J."/>
            <person name="Yuan X."/>
            <person name="Clifton S.W."/>
            <person name="Roe B.A."/>
            <person name="McLaughlin R.E."/>
        </authorList>
    </citation>
    <scope>NUCLEOTIDE SEQUENCE [LARGE SCALE GENOMIC DNA]</scope>
    <source>
        <strain>ATCC 700294 / SF370 / Serotype M1</strain>
    </source>
</reference>
<reference key="2">
    <citation type="journal article" date="2005" name="J. Infect. Dis.">
        <title>Evolutionary origin and emergence of a highly successful clone of serotype M1 group A Streptococcus involved multiple horizontal gene transfer events.</title>
        <authorList>
            <person name="Sumby P."/>
            <person name="Porcella S.F."/>
            <person name="Madrigal A.G."/>
            <person name="Barbian K.D."/>
            <person name="Virtaneva K."/>
            <person name="Ricklefs S.M."/>
            <person name="Sturdevant D.E."/>
            <person name="Graham M.R."/>
            <person name="Vuopio-Varkila J."/>
            <person name="Hoe N.P."/>
            <person name="Musser J.M."/>
        </authorList>
    </citation>
    <scope>NUCLEOTIDE SEQUENCE [LARGE SCALE GENOMIC DNA]</scope>
    <source>
        <strain>ATCC BAA-947 / MGAS5005 / Serotype M1</strain>
    </source>
</reference>
<evidence type="ECO:0000255" key="1">
    <source>
        <dbReference type="HAMAP-Rule" id="MF_01543"/>
    </source>
</evidence>
<accession>Q99XR2</accession>
<accession>Q48W83</accession>
<organism>
    <name type="scientific">Streptococcus pyogenes serotype M1</name>
    <dbReference type="NCBI Taxonomy" id="301447"/>
    <lineage>
        <taxon>Bacteria</taxon>
        <taxon>Bacillati</taxon>
        <taxon>Bacillota</taxon>
        <taxon>Bacilli</taxon>
        <taxon>Lactobacillales</taxon>
        <taxon>Streptococcaceae</taxon>
        <taxon>Streptococcus</taxon>
    </lineage>
</organism>
<gene>
    <name evidence="1" type="primary">fhs2</name>
    <name type="synonym">fhs.2</name>
    <name type="ordered locus">SPy_2085</name>
    <name type="ordered locus">M5005_Spy1774</name>
</gene>
<protein>
    <recommendedName>
        <fullName evidence="1">Formate--tetrahydrofolate ligase 2</fullName>
        <ecNumber evidence="1">6.3.4.3</ecNumber>
    </recommendedName>
    <alternativeName>
        <fullName evidence="1">Formyltetrahydrofolate synthetase 2</fullName>
        <shortName evidence="1">FHS 2</shortName>
        <shortName evidence="1">FTHFS 2</shortName>
    </alternativeName>
</protein>
<proteinExistence type="inferred from homology"/>
<name>FTHS2_STRP1</name>